<accession>A8IAR2</accession>
<proteinExistence type="inferred from homology"/>
<dbReference type="EMBL" id="AP009384">
    <property type="protein sequence ID" value="BAF88546.1"/>
    <property type="molecule type" value="Genomic_DNA"/>
</dbReference>
<dbReference type="RefSeq" id="WP_012171074.1">
    <property type="nucleotide sequence ID" value="NC_009937.1"/>
</dbReference>
<dbReference type="SMR" id="A8IAR2"/>
<dbReference type="STRING" id="438753.AZC_2548"/>
<dbReference type="KEGG" id="azc:AZC_2548"/>
<dbReference type="eggNOG" id="COG0092">
    <property type="taxonomic scope" value="Bacteria"/>
</dbReference>
<dbReference type="HOGENOM" id="CLU_058591_0_2_5"/>
<dbReference type="Proteomes" id="UP000000270">
    <property type="component" value="Chromosome"/>
</dbReference>
<dbReference type="GO" id="GO:0022627">
    <property type="term" value="C:cytosolic small ribosomal subunit"/>
    <property type="evidence" value="ECO:0007669"/>
    <property type="project" value="TreeGrafter"/>
</dbReference>
<dbReference type="GO" id="GO:0003729">
    <property type="term" value="F:mRNA binding"/>
    <property type="evidence" value="ECO:0007669"/>
    <property type="project" value="UniProtKB-UniRule"/>
</dbReference>
<dbReference type="GO" id="GO:0019843">
    <property type="term" value="F:rRNA binding"/>
    <property type="evidence" value="ECO:0007669"/>
    <property type="project" value="UniProtKB-UniRule"/>
</dbReference>
<dbReference type="GO" id="GO:0003735">
    <property type="term" value="F:structural constituent of ribosome"/>
    <property type="evidence" value="ECO:0007669"/>
    <property type="project" value="InterPro"/>
</dbReference>
<dbReference type="GO" id="GO:0006412">
    <property type="term" value="P:translation"/>
    <property type="evidence" value="ECO:0007669"/>
    <property type="project" value="UniProtKB-UniRule"/>
</dbReference>
<dbReference type="CDD" id="cd02412">
    <property type="entry name" value="KH-II_30S_S3"/>
    <property type="match status" value="1"/>
</dbReference>
<dbReference type="FunFam" id="3.30.1140.32:FF:000009">
    <property type="entry name" value="30S ribosomal protein S3"/>
    <property type="match status" value="1"/>
</dbReference>
<dbReference type="FunFam" id="3.30.300.20:FF:000001">
    <property type="entry name" value="30S ribosomal protein S3"/>
    <property type="match status" value="1"/>
</dbReference>
<dbReference type="Gene3D" id="3.30.300.20">
    <property type="match status" value="1"/>
</dbReference>
<dbReference type="Gene3D" id="3.30.1140.32">
    <property type="entry name" value="Ribosomal protein S3, C-terminal domain"/>
    <property type="match status" value="1"/>
</dbReference>
<dbReference type="HAMAP" id="MF_01309_B">
    <property type="entry name" value="Ribosomal_uS3_B"/>
    <property type="match status" value="1"/>
</dbReference>
<dbReference type="InterPro" id="IPR004087">
    <property type="entry name" value="KH_dom"/>
</dbReference>
<dbReference type="InterPro" id="IPR015946">
    <property type="entry name" value="KH_dom-like_a/b"/>
</dbReference>
<dbReference type="InterPro" id="IPR004044">
    <property type="entry name" value="KH_dom_type_2"/>
</dbReference>
<dbReference type="InterPro" id="IPR009019">
    <property type="entry name" value="KH_sf_prok-type"/>
</dbReference>
<dbReference type="InterPro" id="IPR036419">
    <property type="entry name" value="Ribosomal_S3_C_sf"/>
</dbReference>
<dbReference type="InterPro" id="IPR005704">
    <property type="entry name" value="Ribosomal_uS3_bac-typ"/>
</dbReference>
<dbReference type="InterPro" id="IPR001351">
    <property type="entry name" value="Ribosomal_uS3_C"/>
</dbReference>
<dbReference type="InterPro" id="IPR018280">
    <property type="entry name" value="Ribosomal_uS3_CS"/>
</dbReference>
<dbReference type="NCBIfam" id="TIGR01009">
    <property type="entry name" value="rpsC_bact"/>
    <property type="match status" value="1"/>
</dbReference>
<dbReference type="PANTHER" id="PTHR11760">
    <property type="entry name" value="30S/40S RIBOSOMAL PROTEIN S3"/>
    <property type="match status" value="1"/>
</dbReference>
<dbReference type="PANTHER" id="PTHR11760:SF19">
    <property type="entry name" value="SMALL RIBOSOMAL SUBUNIT PROTEIN US3C"/>
    <property type="match status" value="1"/>
</dbReference>
<dbReference type="Pfam" id="PF07650">
    <property type="entry name" value="KH_2"/>
    <property type="match status" value="1"/>
</dbReference>
<dbReference type="Pfam" id="PF00189">
    <property type="entry name" value="Ribosomal_S3_C"/>
    <property type="match status" value="1"/>
</dbReference>
<dbReference type="SMART" id="SM00322">
    <property type="entry name" value="KH"/>
    <property type="match status" value="1"/>
</dbReference>
<dbReference type="SUPFAM" id="SSF54814">
    <property type="entry name" value="Prokaryotic type KH domain (KH-domain type II)"/>
    <property type="match status" value="1"/>
</dbReference>
<dbReference type="SUPFAM" id="SSF54821">
    <property type="entry name" value="Ribosomal protein S3 C-terminal domain"/>
    <property type="match status" value="1"/>
</dbReference>
<dbReference type="PROSITE" id="PS50823">
    <property type="entry name" value="KH_TYPE_2"/>
    <property type="match status" value="1"/>
</dbReference>
<dbReference type="PROSITE" id="PS00548">
    <property type="entry name" value="RIBOSOMAL_S3"/>
    <property type="match status" value="1"/>
</dbReference>
<gene>
    <name evidence="1" type="primary">rpsC</name>
    <name type="ordered locus">AZC_2548</name>
</gene>
<protein>
    <recommendedName>
        <fullName evidence="1">Small ribosomal subunit protein uS3</fullName>
    </recommendedName>
    <alternativeName>
        <fullName evidence="3">30S ribosomal protein S3</fullName>
    </alternativeName>
</protein>
<sequence>MGQKVNPVGLRLGINRTWDSRWFANKGDYGTLLHEDIKIRQMLLKQLKQAAVSKVVIERPHKKCRVTIYSARPGVVIGKKGADIDKLRKKVADMTKSEVFINIVEIRKPEIDARLVAESIAQQLERRVAFRRAMKRAVQSAMRLGAEGIRINCSGRLGGAEIARLEWYREGRVPLHTLRADVDYGTATAFTTYGTCGVKVWIFKGEILEHDPMAVDKRMTAESEGPSSGRPPRRDRDRDRDRDRDSAA</sequence>
<feature type="chain" id="PRO_1000086088" description="Small ribosomal subunit protein uS3">
    <location>
        <begin position="1"/>
        <end position="248"/>
    </location>
</feature>
<feature type="domain" description="KH type-2" evidence="1">
    <location>
        <begin position="39"/>
        <end position="107"/>
    </location>
</feature>
<feature type="region of interest" description="Disordered" evidence="2">
    <location>
        <begin position="214"/>
        <end position="248"/>
    </location>
</feature>
<feature type="compositionally biased region" description="Basic and acidic residues" evidence="2">
    <location>
        <begin position="232"/>
        <end position="248"/>
    </location>
</feature>
<name>RS3_AZOC5</name>
<keyword id="KW-1185">Reference proteome</keyword>
<keyword id="KW-0687">Ribonucleoprotein</keyword>
<keyword id="KW-0689">Ribosomal protein</keyword>
<keyword id="KW-0694">RNA-binding</keyword>
<keyword id="KW-0699">rRNA-binding</keyword>
<evidence type="ECO:0000255" key="1">
    <source>
        <dbReference type="HAMAP-Rule" id="MF_01309"/>
    </source>
</evidence>
<evidence type="ECO:0000256" key="2">
    <source>
        <dbReference type="SAM" id="MobiDB-lite"/>
    </source>
</evidence>
<evidence type="ECO:0000305" key="3"/>
<reference key="1">
    <citation type="submission" date="2007-04" db="EMBL/GenBank/DDBJ databases">
        <title>Complete genome sequence of the nitrogen-fixing bacterium Azorhizobium caulinodans ORS571.</title>
        <authorList>
            <person name="Lee K.B."/>
            <person name="Backer P.D."/>
            <person name="Aono T."/>
            <person name="Liu C.T."/>
            <person name="Suzuki S."/>
            <person name="Suzuki T."/>
            <person name="Kaneko T."/>
            <person name="Yamada M."/>
            <person name="Tabata S."/>
            <person name="Kupfer D.M."/>
            <person name="Najar F.Z."/>
            <person name="Wiley G.B."/>
            <person name="Roe B."/>
            <person name="Binnewies T."/>
            <person name="Ussery D."/>
            <person name="Vereecke D."/>
            <person name="Gevers D."/>
            <person name="Holsters M."/>
            <person name="Oyaizu H."/>
        </authorList>
    </citation>
    <scope>NUCLEOTIDE SEQUENCE [LARGE SCALE GENOMIC DNA]</scope>
    <source>
        <strain>ATCC 43989 / DSM 5975 / JCM 20966 / LMG 6465 / NBRC 14845 / NCIMB 13405 / ORS 571</strain>
    </source>
</reference>
<comment type="function">
    <text evidence="1">Binds the lower part of the 30S subunit head. Binds mRNA in the 70S ribosome, positioning it for translation.</text>
</comment>
<comment type="subunit">
    <text evidence="1">Part of the 30S ribosomal subunit. Forms a tight complex with proteins S10 and S14.</text>
</comment>
<comment type="similarity">
    <text evidence="1">Belongs to the universal ribosomal protein uS3 family.</text>
</comment>
<organism>
    <name type="scientific">Azorhizobium caulinodans (strain ATCC 43989 / DSM 5975 / JCM 20966 / LMG 6465 / NBRC 14845 / NCIMB 13405 / ORS 571)</name>
    <dbReference type="NCBI Taxonomy" id="438753"/>
    <lineage>
        <taxon>Bacteria</taxon>
        <taxon>Pseudomonadati</taxon>
        <taxon>Pseudomonadota</taxon>
        <taxon>Alphaproteobacteria</taxon>
        <taxon>Hyphomicrobiales</taxon>
        <taxon>Xanthobacteraceae</taxon>
        <taxon>Azorhizobium</taxon>
    </lineage>
</organism>